<reference key="1">
    <citation type="journal article" date="2009" name="PLoS Biol.">
        <title>Lineage-specific biology revealed by a finished genome assembly of the mouse.</title>
        <authorList>
            <person name="Church D.M."/>
            <person name="Goodstadt L."/>
            <person name="Hillier L.W."/>
            <person name="Zody M.C."/>
            <person name="Goldstein S."/>
            <person name="She X."/>
            <person name="Bult C.J."/>
            <person name="Agarwala R."/>
            <person name="Cherry J.L."/>
            <person name="DiCuccio M."/>
            <person name="Hlavina W."/>
            <person name="Kapustin Y."/>
            <person name="Meric P."/>
            <person name="Maglott D."/>
            <person name="Birtle Z."/>
            <person name="Marques A.C."/>
            <person name="Graves T."/>
            <person name="Zhou S."/>
            <person name="Teague B."/>
            <person name="Potamousis K."/>
            <person name="Churas C."/>
            <person name="Place M."/>
            <person name="Herschleb J."/>
            <person name="Runnheim R."/>
            <person name="Forrest D."/>
            <person name="Amos-Landgraf J."/>
            <person name="Schwartz D.C."/>
            <person name="Cheng Z."/>
            <person name="Lindblad-Toh K."/>
            <person name="Eichler E.E."/>
            <person name="Ponting C.P."/>
        </authorList>
    </citation>
    <scope>NUCLEOTIDE SEQUENCE [LARGE SCALE GENOMIC DNA]</scope>
    <source>
        <strain>C57BL/6J</strain>
    </source>
</reference>
<reference key="2">
    <citation type="journal article" date="1997" name="Gene">
        <title>Identification of dynein heavy chain genes expressed in human and mouse testis: chromosomal localization of an axonemal dynein gene.</title>
        <authorList>
            <person name="Neesen J."/>
            <person name="Koehler M.R."/>
            <person name="Kirschner R."/>
            <person name="Steinlein C."/>
            <person name="Kreutzberger J."/>
            <person name="Engel W."/>
            <person name="Schmid M."/>
        </authorList>
    </citation>
    <scope>NUCLEOTIDE SEQUENCE [MRNA] OF 1381-1584 (ISOFORM 1)</scope>
    <source>
        <strain>NMRI</strain>
        <tissue>Testis</tissue>
    </source>
</reference>
<reference key="3">
    <citation type="journal article" date="2004" name="Genome Res.">
        <title>The status, quality, and expansion of the NIH full-length cDNA project: the Mammalian Gene Collection (MGC).</title>
        <authorList>
            <consortium name="The MGC Project Team"/>
        </authorList>
    </citation>
    <scope>NUCLEOTIDE SEQUENCE [LARGE SCALE MRNA] OF 2388-4083 (ISOFORM 3)</scope>
    <source>
        <tissue>Olfactory epithelium</tissue>
    </source>
</reference>
<reference key="4">
    <citation type="journal article" date="2005" name="Science">
        <title>The transcriptional landscape of the mammalian genome.</title>
        <authorList>
            <person name="Carninci P."/>
            <person name="Kasukawa T."/>
            <person name="Katayama S."/>
            <person name="Gough J."/>
            <person name="Frith M.C."/>
            <person name="Maeda N."/>
            <person name="Oyama R."/>
            <person name="Ravasi T."/>
            <person name="Lenhard B."/>
            <person name="Wells C."/>
            <person name="Kodzius R."/>
            <person name="Shimokawa K."/>
            <person name="Bajic V.B."/>
            <person name="Brenner S.E."/>
            <person name="Batalov S."/>
            <person name="Forrest A.R."/>
            <person name="Zavolan M."/>
            <person name="Davis M.J."/>
            <person name="Wilming L.G."/>
            <person name="Aidinis V."/>
            <person name="Allen J.E."/>
            <person name="Ambesi-Impiombato A."/>
            <person name="Apweiler R."/>
            <person name="Aturaliya R.N."/>
            <person name="Bailey T.L."/>
            <person name="Bansal M."/>
            <person name="Baxter L."/>
            <person name="Beisel K.W."/>
            <person name="Bersano T."/>
            <person name="Bono H."/>
            <person name="Chalk A.M."/>
            <person name="Chiu K.P."/>
            <person name="Choudhary V."/>
            <person name="Christoffels A."/>
            <person name="Clutterbuck D.R."/>
            <person name="Crowe M.L."/>
            <person name="Dalla E."/>
            <person name="Dalrymple B.P."/>
            <person name="de Bono B."/>
            <person name="Della Gatta G."/>
            <person name="di Bernardo D."/>
            <person name="Down T."/>
            <person name="Engstrom P."/>
            <person name="Fagiolini M."/>
            <person name="Faulkner G."/>
            <person name="Fletcher C.F."/>
            <person name="Fukushima T."/>
            <person name="Furuno M."/>
            <person name="Futaki S."/>
            <person name="Gariboldi M."/>
            <person name="Georgii-Hemming P."/>
            <person name="Gingeras T.R."/>
            <person name="Gojobori T."/>
            <person name="Green R.E."/>
            <person name="Gustincich S."/>
            <person name="Harbers M."/>
            <person name="Hayashi Y."/>
            <person name="Hensch T.K."/>
            <person name="Hirokawa N."/>
            <person name="Hill D."/>
            <person name="Huminiecki L."/>
            <person name="Iacono M."/>
            <person name="Ikeo K."/>
            <person name="Iwama A."/>
            <person name="Ishikawa T."/>
            <person name="Jakt M."/>
            <person name="Kanapin A."/>
            <person name="Katoh M."/>
            <person name="Kawasawa Y."/>
            <person name="Kelso J."/>
            <person name="Kitamura H."/>
            <person name="Kitano H."/>
            <person name="Kollias G."/>
            <person name="Krishnan S.P."/>
            <person name="Kruger A."/>
            <person name="Kummerfeld S.K."/>
            <person name="Kurochkin I.V."/>
            <person name="Lareau L.F."/>
            <person name="Lazarevic D."/>
            <person name="Lipovich L."/>
            <person name="Liu J."/>
            <person name="Liuni S."/>
            <person name="McWilliam S."/>
            <person name="Madan Babu M."/>
            <person name="Madera M."/>
            <person name="Marchionni L."/>
            <person name="Matsuda H."/>
            <person name="Matsuzawa S."/>
            <person name="Miki H."/>
            <person name="Mignone F."/>
            <person name="Miyake S."/>
            <person name="Morris K."/>
            <person name="Mottagui-Tabar S."/>
            <person name="Mulder N."/>
            <person name="Nakano N."/>
            <person name="Nakauchi H."/>
            <person name="Ng P."/>
            <person name="Nilsson R."/>
            <person name="Nishiguchi S."/>
            <person name="Nishikawa S."/>
            <person name="Nori F."/>
            <person name="Ohara O."/>
            <person name="Okazaki Y."/>
            <person name="Orlando V."/>
            <person name="Pang K.C."/>
            <person name="Pavan W.J."/>
            <person name="Pavesi G."/>
            <person name="Pesole G."/>
            <person name="Petrovsky N."/>
            <person name="Piazza S."/>
            <person name="Reed J."/>
            <person name="Reid J.F."/>
            <person name="Ring B.Z."/>
            <person name="Ringwald M."/>
            <person name="Rost B."/>
            <person name="Ruan Y."/>
            <person name="Salzberg S.L."/>
            <person name="Sandelin A."/>
            <person name="Schneider C."/>
            <person name="Schoenbach C."/>
            <person name="Sekiguchi K."/>
            <person name="Semple C.A."/>
            <person name="Seno S."/>
            <person name="Sessa L."/>
            <person name="Sheng Y."/>
            <person name="Shibata Y."/>
            <person name="Shimada H."/>
            <person name="Shimada K."/>
            <person name="Silva D."/>
            <person name="Sinclair B."/>
            <person name="Sperling S."/>
            <person name="Stupka E."/>
            <person name="Sugiura K."/>
            <person name="Sultana R."/>
            <person name="Takenaka Y."/>
            <person name="Taki K."/>
            <person name="Tammoja K."/>
            <person name="Tan S.L."/>
            <person name="Tang S."/>
            <person name="Taylor M.S."/>
            <person name="Tegner J."/>
            <person name="Teichmann S.A."/>
            <person name="Ueda H.R."/>
            <person name="van Nimwegen E."/>
            <person name="Verardo R."/>
            <person name="Wei C.L."/>
            <person name="Yagi K."/>
            <person name="Yamanishi H."/>
            <person name="Zabarovsky E."/>
            <person name="Zhu S."/>
            <person name="Zimmer A."/>
            <person name="Hide W."/>
            <person name="Bult C."/>
            <person name="Grimmond S.M."/>
            <person name="Teasdale R.D."/>
            <person name="Liu E.T."/>
            <person name="Brusic V."/>
            <person name="Quackenbush J."/>
            <person name="Wahlestedt C."/>
            <person name="Mattick J.S."/>
            <person name="Hume D.A."/>
            <person name="Kai C."/>
            <person name="Sasaki D."/>
            <person name="Tomaru Y."/>
            <person name="Fukuda S."/>
            <person name="Kanamori-Katayama M."/>
            <person name="Suzuki M."/>
            <person name="Aoki J."/>
            <person name="Arakawa T."/>
            <person name="Iida J."/>
            <person name="Imamura K."/>
            <person name="Itoh M."/>
            <person name="Kato T."/>
            <person name="Kawaji H."/>
            <person name="Kawagashira N."/>
            <person name="Kawashima T."/>
            <person name="Kojima M."/>
            <person name="Kondo S."/>
            <person name="Konno H."/>
            <person name="Nakano K."/>
            <person name="Ninomiya N."/>
            <person name="Nishio T."/>
            <person name="Okada M."/>
            <person name="Plessy C."/>
            <person name="Shibata K."/>
            <person name="Shiraki T."/>
            <person name="Suzuki S."/>
            <person name="Tagami M."/>
            <person name="Waki K."/>
            <person name="Watahiki A."/>
            <person name="Okamura-Oho Y."/>
            <person name="Suzuki H."/>
            <person name="Kawai J."/>
            <person name="Hayashizaki Y."/>
        </authorList>
    </citation>
    <scope>NUCLEOTIDE SEQUENCE [LARGE SCALE MRNA] OF 2980-4083 (ISOFORM 2)</scope>
    <source>
        <strain>C57BL/6J</strain>
        <tissue>Lung</tissue>
    </source>
</reference>
<reference key="5">
    <citation type="journal article" date="2010" name="Cell">
        <title>A tissue-specific atlas of mouse protein phosphorylation and expression.</title>
        <authorList>
            <person name="Huttlin E.L."/>
            <person name="Jedrychowski M.P."/>
            <person name="Elias J.E."/>
            <person name="Goswami T."/>
            <person name="Rad R."/>
            <person name="Beausoleil S.A."/>
            <person name="Villen J."/>
            <person name="Haas W."/>
            <person name="Sowa M.E."/>
            <person name="Gygi S.P."/>
        </authorList>
    </citation>
    <scope>IDENTIFICATION BY MASS SPECTROMETRY [LARGE SCALE ANALYSIS]</scope>
    <source>
        <tissue>Testis</tissue>
    </source>
</reference>
<keyword id="KW-0025">Alternative splicing</keyword>
<keyword id="KW-0067">ATP-binding</keyword>
<keyword id="KW-0966">Cell projection</keyword>
<keyword id="KW-0969">Cilium</keyword>
<keyword id="KW-0175">Coiled coil</keyword>
<keyword id="KW-0963">Cytoplasm</keyword>
<keyword id="KW-0206">Cytoskeleton</keyword>
<keyword id="KW-0243">Dynein</keyword>
<keyword id="KW-0493">Microtubule</keyword>
<keyword id="KW-0505">Motor protein</keyword>
<keyword id="KW-0547">Nucleotide-binding</keyword>
<keyword id="KW-1185">Reference proteome</keyword>
<feature type="chain" id="PRO_0000322545" description="Dynein axonemal heavy chain 3">
    <location>
        <begin position="1"/>
        <end position="4083"/>
    </location>
</feature>
<feature type="region of interest" description="Stem" evidence="1">
    <location>
        <begin position="1"/>
        <end position="1357"/>
    </location>
</feature>
<feature type="region of interest" description="Disordered" evidence="3">
    <location>
        <begin position="1"/>
        <end position="37"/>
    </location>
</feature>
<feature type="region of interest" description="Disordered" evidence="3">
    <location>
        <begin position="111"/>
        <end position="132"/>
    </location>
</feature>
<feature type="region of interest" description="AAA 1" evidence="1">
    <location>
        <begin position="1358"/>
        <end position="1579"/>
    </location>
</feature>
<feature type="region of interest" description="AAA 2" evidence="1">
    <location>
        <begin position="1639"/>
        <end position="1870"/>
    </location>
</feature>
<feature type="region of interest" description="AAA 3" evidence="1">
    <location>
        <begin position="2003"/>
        <end position="2251"/>
    </location>
</feature>
<feature type="region of interest" description="AAA 4" evidence="1">
    <location>
        <begin position="2362"/>
        <end position="2613"/>
    </location>
</feature>
<feature type="region of interest" description="Stalk" evidence="1">
    <location>
        <begin position="2628"/>
        <end position="2927"/>
    </location>
</feature>
<feature type="region of interest" description="AAA 5" evidence="1">
    <location>
        <begin position="3012"/>
        <end position="3242"/>
    </location>
</feature>
<feature type="region of interest" description="AAA 6" evidence="1">
    <location>
        <begin position="3455"/>
        <end position="3679"/>
    </location>
</feature>
<feature type="coiled-coil region" evidence="2">
    <location>
        <begin position="1026"/>
        <end position="1052"/>
    </location>
</feature>
<feature type="coiled-coil region" evidence="2">
    <location>
        <begin position="1108"/>
        <end position="1133"/>
    </location>
</feature>
<feature type="coiled-coil region" evidence="2">
    <location>
        <begin position="2651"/>
        <end position="2714"/>
    </location>
</feature>
<feature type="binding site" evidence="2">
    <location>
        <begin position="1396"/>
        <end position="1403"/>
    </location>
    <ligand>
        <name>ATP</name>
        <dbReference type="ChEBI" id="CHEBI:30616"/>
    </ligand>
</feature>
<feature type="binding site" evidence="2">
    <location>
        <begin position="1677"/>
        <end position="1684"/>
    </location>
    <ligand>
        <name>ATP</name>
        <dbReference type="ChEBI" id="CHEBI:30616"/>
    </ligand>
</feature>
<feature type="binding site" evidence="2">
    <location>
        <begin position="2041"/>
        <end position="2048"/>
    </location>
    <ligand>
        <name>ATP</name>
        <dbReference type="ChEBI" id="CHEBI:30616"/>
    </ligand>
</feature>
<feature type="binding site" evidence="2">
    <location>
        <begin position="2401"/>
        <end position="2408"/>
    </location>
    <ligand>
        <name>ATP</name>
        <dbReference type="ChEBI" id="CHEBI:30616"/>
    </ligand>
</feature>
<feature type="splice variant" id="VSP_031926" description="In isoform 3." evidence="4">
    <original>GTNRAYFS</original>
    <variation>VRKNLHIV</variation>
    <location>
        <begin position="2523"/>
        <end position="2530"/>
    </location>
</feature>
<feature type="splice variant" id="VSP_031927" description="In isoform 3." evidence="4">
    <original>KNECEGDLAEAMPALEAA</original>
    <variation>KVCDQARGAQGANTAKRM</variation>
    <location>
        <begin position="2720"/>
        <end position="2737"/>
    </location>
</feature>
<feature type="splice variant" id="VSP_031928" description="In isoform 3." evidence="4">
    <location>
        <begin position="2738"/>
        <end position="4083"/>
    </location>
</feature>
<feature type="splice variant" id="VSP_031929" description="In isoform 2." evidence="5">
    <original>EWIDKGPPVVFWISGFYFTQSFLTGVSQNYARKYTIP</original>
    <variation>VPGNLGNWIPGSSLRWRRHCGVAEQKLGTRVGSCVAS</variation>
    <location>
        <begin position="3921"/>
        <end position="3957"/>
    </location>
</feature>
<feature type="splice variant" id="VSP_031930" description="In isoform 2." evidence="5">
    <location>
        <begin position="3958"/>
        <end position="4083"/>
    </location>
</feature>
<feature type="sequence conflict" description="In Ref. 2; CAB06070." evidence="6" ref="2">
    <original>AELP</original>
    <variation>SDLQ</variation>
    <location>
        <begin position="1506"/>
        <end position="1509"/>
    </location>
</feature>
<feature type="sequence conflict" description="In Ref. 2; CAB06070." evidence="6" ref="2">
    <original>A</original>
    <variation>P</variation>
    <location>
        <position position="1514"/>
    </location>
</feature>
<feature type="sequence conflict" description="In Ref. 2; CAB06070." evidence="6" ref="2">
    <original>A</original>
    <variation>P</variation>
    <location>
        <position position="1520"/>
    </location>
</feature>
<feature type="sequence conflict" description="In Ref. 2; CAB06070." evidence="6" ref="2">
    <original>MR</original>
    <variation>IS</variation>
    <location>
        <begin position="1570"/>
        <end position="1571"/>
    </location>
</feature>
<feature type="sequence conflict" description="In Ref. 4; BAC35298." evidence="6" ref="4">
    <original>P</original>
    <variation>T</variation>
    <location>
        <position position="3182"/>
    </location>
</feature>
<protein>
    <recommendedName>
        <fullName>Dynein axonemal heavy chain 3</fullName>
    </recommendedName>
    <alternativeName>
        <fullName>Axonemal beta dynein heavy chain 3</fullName>
    </alternativeName>
    <alternativeName>
        <fullName>Ciliary dynein heavy chain 3</fullName>
    </alternativeName>
</protein>
<organism>
    <name type="scientific">Mus musculus</name>
    <name type="common">Mouse</name>
    <dbReference type="NCBI Taxonomy" id="10090"/>
    <lineage>
        <taxon>Eukaryota</taxon>
        <taxon>Metazoa</taxon>
        <taxon>Chordata</taxon>
        <taxon>Craniata</taxon>
        <taxon>Vertebrata</taxon>
        <taxon>Euteleostomi</taxon>
        <taxon>Mammalia</taxon>
        <taxon>Eutheria</taxon>
        <taxon>Euarchontoglires</taxon>
        <taxon>Glires</taxon>
        <taxon>Rodentia</taxon>
        <taxon>Myomorpha</taxon>
        <taxon>Muroidea</taxon>
        <taxon>Muridae</taxon>
        <taxon>Murinae</taxon>
        <taxon>Mus</taxon>
        <taxon>Mus</taxon>
    </lineage>
</organism>
<accession>Q8BW94</accession>
<accession>O08829</accession>
<accession>Q7TT83</accession>
<name>DYH3_MOUSE</name>
<dbReference type="EMBL" id="AC122853">
    <property type="status" value="NOT_ANNOTATED_CDS"/>
    <property type="molecule type" value="Genomic_DNA"/>
</dbReference>
<dbReference type="EMBL" id="AC131702">
    <property type="status" value="NOT_ANNOTATED_CDS"/>
    <property type="molecule type" value="Genomic_DNA"/>
</dbReference>
<dbReference type="EMBL" id="Z83816">
    <property type="protein sequence ID" value="CAB06070.1"/>
    <property type="molecule type" value="mRNA"/>
</dbReference>
<dbReference type="EMBL" id="BC051401">
    <property type="protein sequence ID" value="AAH51401.1"/>
    <property type="molecule type" value="mRNA"/>
</dbReference>
<dbReference type="EMBL" id="AK053178">
    <property type="protein sequence ID" value="BAC35298.1"/>
    <property type="status" value="ALT_INIT"/>
    <property type="molecule type" value="mRNA"/>
</dbReference>
<dbReference type="SMR" id="Q8BW94"/>
<dbReference type="FunCoup" id="Q8BW94">
    <property type="interactions" value="39"/>
</dbReference>
<dbReference type="STRING" id="10090.ENSMUSP00000042857"/>
<dbReference type="GlyGen" id="Q8BW94">
    <property type="glycosylation" value="3 sites"/>
</dbReference>
<dbReference type="iPTMnet" id="Q8BW94"/>
<dbReference type="PhosphoSitePlus" id="Q8BW94"/>
<dbReference type="SwissPalm" id="Q8BW94"/>
<dbReference type="jPOST" id="Q8BW94"/>
<dbReference type="PaxDb" id="10090-ENSMUSP00000042857"/>
<dbReference type="ProteomicsDB" id="277644">
    <molecule id="Q8BW94-1"/>
</dbReference>
<dbReference type="ProteomicsDB" id="277645">
    <molecule id="Q8BW94-2"/>
</dbReference>
<dbReference type="ProteomicsDB" id="277646">
    <molecule id="Q8BW94-3"/>
</dbReference>
<dbReference type="Antibodypedia" id="67049">
    <property type="antibodies" value="26 antibodies from 6 providers"/>
</dbReference>
<dbReference type="Ensembl" id="ENSMUST00000046993.4">
    <molecule id="Q8BW94-1"/>
    <property type="protein sequence ID" value="ENSMUSP00000042857.4"/>
    <property type="gene ID" value="ENSMUSG00000052273.5"/>
</dbReference>
<dbReference type="AGR" id="MGI:2683040"/>
<dbReference type="MGI" id="MGI:2683040">
    <property type="gene designation" value="Dnah3"/>
</dbReference>
<dbReference type="VEuPathDB" id="HostDB:ENSMUSG00000052273"/>
<dbReference type="eggNOG" id="KOG3595">
    <property type="taxonomic scope" value="Eukaryota"/>
</dbReference>
<dbReference type="GeneTree" id="ENSGT00940000154959"/>
<dbReference type="HOGENOM" id="CLU_000038_0_0_1"/>
<dbReference type="InParanoid" id="Q8BW94"/>
<dbReference type="OrthoDB" id="5593012at2759"/>
<dbReference type="PhylomeDB" id="Q8BW94"/>
<dbReference type="TreeFam" id="TF316836"/>
<dbReference type="ChiTaRS" id="Dnah3">
    <property type="organism name" value="mouse"/>
</dbReference>
<dbReference type="PRO" id="PR:Q8BW94"/>
<dbReference type="Proteomes" id="UP000000589">
    <property type="component" value="Chromosome 7"/>
</dbReference>
<dbReference type="RNAct" id="Q8BW94">
    <property type="molecule type" value="protein"/>
</dbReference>
<dbReference type="Bgee" id="ENSMUSG00000052273">
    <property type="expression patterns" value="Expressed in spermatid and 22 other cell types or tissues"/>
</dbReference>
<dbReference type="ExpressionAtlas" id="Q8BW94">
    <property type="expression patterns" value="baseline and differential"/>
</dbReference>
<dbReference type="GO" id="GO:0036156">
    <property type="term" value="C:inner dynein arm"/>
    <property type="evidence" value="ECO:0000255"/>
    <property type="project" value="MGI"/>
</dbReference>
<dbReference type="GO" id="GO:0005874">
    <property type="term" value="C:microtubule"/>
    <property type="evidence" value="ECO:0007669"/>
    <property type="project" value="UniProtKB-KW"/>
</dbReference>
<dbReference type="GO" id="GO:0005524">
    <property type="term" value="F:ATP binding"/>
    <property type="evidence" value="ECO:0007669"/>
    <property type="project" value="UniProtKB-KW"/>
</dbReference>
<dbReference type="GO" id="GO:0016887">
    <property type="term" value="F:ATP hydrolysis activity"/>
    <property type="evidence" value="ECO:0007669"/>
    <property type="project" value="InterPro"/>
</dbReference>
<dbReference type="GO" id="GO:0045505">
    <property type="term" value="F:dynein intermediate chain binding"/>
    <property type="evidence" value="ECO:0007669"/>
    <property type="project" value="InterPro"/>
</dbReference>
<dbReference type="GO" id="GO:0051959">
    <property type="term" value="F:dynein light intermediate chain binding"/>
    <property type="evidence" value="ECO:0007669"/>
    <property type="project" value="InterPro"/>
</dbReference>
<dbReference type="GO" id="GO:0008569">
    <property type="term" value="F:minus-end-directed microtubule motor activity"/>
    <property type="evidence" value="ECO:0007669"/>
    <property type="project" value="InterPro"/>
</dbReference>
<dbReference type="GO" id="GO:0007018">
    <property type="term" value="P:microtubule-based movement"/>
    <property type="evidence" value="ECO:0007669"/>
    <property type="project" value="InterPro"/>
</dbReference>
<dbReference type="CDD" id="cd00009">
    <property type="entry name" value="AAA"/>
    <property type="match status" value="1"/>
</dbReference>
<dbReference type="FunFam" id="1.10.472.130:FF:000008">
    <property type="entry name" value="Dynein axonemal heavy chain 3"/>
    <property type="match status" value="1"/>
</dbReference>
<dbReference type="FunFam" id="1.20.920.30:FF:000002">
    <property type="entry name" value="Dynein axonemal heavy chain 3"/>
    <property type="match status" value="1"/>
</dbReference>
<dbReference type="FunFam" id="1.10.8.1220:FF:000001">
    <property type="entry name" value="Dynein axonemal heavy chain 5"/>
    <property type="match status" value="1"/>
</dbReference>
<dbReference type="FunFam" id="1.10.8.710:FF:000004">
    <property type="entry name" value="Dynein axonemal heavy chain 6"/>
    <property type="match status" value="1"/>
</dbReference>
<dbReference type="FunFam" id="1.20.140.100:FF:000004">
    <property type="entry name" value="Dynein axonemal heavy chain 6"/>
    <property type="match status" value="1"/>
</dbReference>
<dbReference type="FunFam" id="3.40.50.300:FF:002141">
    <property type="entry name" value="Dynein heavy chain"/>
    <property type="match status" value="1"/>
</dbReference>
<dbReference type="FunFam" id="3.20.180.20:FF:000003">
    <property type="entry name" value="Dynein heavy chain 12, axonemal"/>
    <property type="match status" value="1"/>
</dbReference>
<dbReference type="FunFam" id="1.10.287.2620:FF:000002">
    <property type="entry name" value="Dynein heavy chain 2, axonemal"/>
    <property type="match status" value="1"/>
</dbReference>
<dbReference type="FunFam" id="3.40.50.300:FF:000223">
    <property type="entry name" value="Dynein heavy chain 3, axonemal"/>
    <property type="match status" value="1"/>
</dbReference>
<dbReference type="FunFam" id="3.40.50.300:FF:001328">
    <property type="entry name" value="Dynein heavy chain 6, axonemal"/>
    <property type="match status" value="1"/>
</dbReference>
<dbReference type="FunFam" id="3.40.50.300:FF:000063">
    <property type="entry name" value="dynein heavy chain 6, axonemal"/>
    <property type="match status" value="1"/>
</dbReference>
<dbReference type="FunFam" id="1.10.8.720:FF:000001">
    <property type="entry name" value="dynein heavy chain 7, axonemal"/>
    <property type="match status" value="1"/>
</dbReference>
<dbReference type="FunFam" id="1.20.1270.280:FF:000001">
    <property type="entry name" value="dynein heavy chain 7, axonemal"/>
    <property type="match status" value="1"/>
</dbReference>
<dbReference type="FunFam" id="3.10.490.20:FF:000001">
    <property type="entry name" value="dynein heavy chain 7, axonemal"/>
    <property type="match status" value="1"/>
</dbReference>
<dbReference type="FunFam" id="1.20.58.1120:FF:000005">
    <property type="entry name" value="Dynein, axonemal, heavy chain 12"/>
    <property type="match status" value="1"/>
</dbReference>
<dbReference type="FunFam" id="1.20.920.20:FF:000006">
    <property type="entry name" value="Dynein, axonemal, heavy chain 6"/>
    <property type="match status" value="1"/>
</dbReference>
<dbReference type="FunFam" id="3.40.50.300:FF:000362">
    <property type="entry name" value="Dynein, axonemal, heavy chain 6"/>
    <property type="match status" value="1"/>
</dbReference>
<dbReference type="FunFam" id="3.40.50.300:FF:005585">
    <property type="entry name" value="Predicted protein"/>
    <property type="match status" value="1"/>
</dbReference>
<dbReference type="Gene3D" id="1.10.287.2620">
    <property type="match status" value="1"/>
</dbReference>
<dbReference type="Gene3D" id="1.10.472.130">
    <property type="match status" value="1"/>
</dbReference>
<dbReference type="Gene3D" id="1.10.8.1220">
    <property type="match status" value="1"/>
</dbReference>
<dbReference type="Gene3D" id="1.10.8.710">
    <property type="match status" value="1"/>
</dbReference>
<dbReference type="Gene3D" id="1.20.1270.280">
    <property type="match status" value="1"/>
</dbReference>
<dbReference type="Gene3D" id="1.20.58.1120">
    <property type="match status" value="1"/>
</dbReference>
<dbReference type="Gene3D" id="1.20.920.20">
    <property type="match status" value="1"/>
</dbReference>
<dbReference type="Gene3D" id="1.20.920.30">
    <property type="match status" value="1"/>
</dbReference>
<dbReference type="Gene3D" id="3.10.490.20">
    <property type="match status" value="1"/>
</dbReference>
<dbReference type="Gene3D" id="6.10.140.1060">
    <property type="match status" value="1"/>
</dbReference>
<dbReference type="Gene3D" id="1.20.140.100">
    <property type="entry name" value="Dynein heavy chain, N-terminal domain 2"/>
    <property type="match status" value="1"/>
</dbReference>
<dbReference type="Gene3D" id="3.20.180.20">
    <property type="entry name" value="Dynein heavy chain, N-terminal domain 2"/>
    <property type="match status" value="1"/>
</dbReference>
<dbReference type="Gene3D" id="3.40.50.300">
    <property type="entry name" value="P-loop containing nucleotide triphosphate hydrolases"/>
    <property type="match status" value="5"/>
</dbReference>
<dbReference type="Gene3D" id="1.10.8.720">
    <property type="entry name" value="Region D6 of dynein motor"/>
    <property type="match status" value="1"/>
</dbReference>
<dbReference type="InterPro" id="IPR003593">
    <property type="entry name" value="AAA+_ATPase"/>
</dbReference>
<dbReference type="InterPro" id="IPR035699">
    <property type="entry name" value="AAA_6"/>
</dbReference>
<dbReference type="InterPro" id="IPR035706">
    <property type="entry name" value="AAA_9"/>
</dbReference>
<dbReference type="InterPro" id="IPR041658">
    <property type="entry name" value="AAA_lid_11"/>
</dbReference>
<dbReference type="InterPro" id="IPR042219">
    <property type="entry name" value="AAA_lid_11_sf"/>
</dbReference>
<dbReference type="InterPro" id="IPR026983">
    <property type="entry name" value="DHC"/>
</dbReference>
<dbReference type="InterPro" id="IPR041589">
    <property type="entry name" value="DNAH3_AAA_lid_1"/>
</dbReference>
<dbReference type="InterPro" id="IPR042222">
    <property type="entry name" value="Dynein_2_N"/>
</dbReference>
<dbReference type="InterPro" id="IPR043157">
    <property type="entry name" value="Dynein_AAA1S"/>
</dbReference>
<dbReference type="InterPro" id="IPR041466">
    <property type="entry name" value="Dynein_AAA5_ext"/>
</dbReference>
<dbReference type="InterPro" id="IPR041228">
    <property type="entry name" value="Dynein_C"/>
</dbReference>
<dbReference type="InterPro" id="IPR043160">
    <property type="entry name" value="Dynein_C_barrel"/>
</dbReference>
<dbReference type="InterPro" id="IPR024743">
    <property type="entry name" value="Dynein_HC_stalk"/>
</dbReference>
<dbReference type="InterPro" id="IPR024317">
    <property type="entry name" value="Dynein_heavy_chain_D4_dom"/>
</dbReference>
<dbReference type="InterPro" id="IPR004273">
    <property type="entry name" value="Dynein_heavy_D6_P-loop"/>
</dbReference>
<dbReference type="InterPro" id="IPR013602">
    <property type="entry name" value="Dynein_heavy_linker"/>
</dbReference>
<dbReference type="InterPro" id="IPR042228">
    <property type="entry name" value="Dynein_linker_3"/>
</dbReference>
<dbReference type="InterPro" id="IPR027417">
    <property type="entry name" value="P-loop_NTPase"/>
</dbReference>
<dbReference type="PANTHER" id="PTHR22878">
    <property type="entry name" value="DYNEIN HEAVY CHAIN 6, AXONEMAL-LIKE-RELATED"/>
    <property type="match status" value="1"/>
</dbReference>
<dbReference type="PANTHER" id="PTHR22878:SF71">
    <property type="entry name" value="DYNEIN, AXONEMAL, HEAVY CHAIN 3"/>
    <property type="match status" value="1"/>
</dbReference>
<dbReference type="Pfam" id="PF12774">
    <property type="entry name" value="AAA_6"/>
    <property type="match status" value="1"/>
</dbReference>
<dbReference type="Pfam" id="PF12775">
    <property type="entry name" value="AAA_7"/>
    <property type="match status" value="1"/>
</dbReference>
<dbReference type="Pfam" id="PF12780">
    <property type="entry name" value="AAA_8"/>
    <property type="match status" value="1"/>
</dbReference>
<dbReference type="Pfam" id="PF12781">
    <property type="entry name" value="AAA_9"/>
    <property type="match status" value="1"/>
</dbReference>
<dbReference type="Pfam" id="PF17857">
    <property type="entry name" value="AAA_lid_1"/>
    <property type="match status" value="1"/>
</dbReference>
<dbReference type="Pfam" id="PF18198">
    <property type="entry name" value="AAA_lid_11"/>
    <property type="match status" value="1"/>
</dbReference>
<dbReference type="Pfam" id="PF08393">
    <property type="entry name" value="DHC_N2"/>
    <property type="match status" value="1"/>
</dbReference>
<dbReference type="Pfam" id="PF17852">
    <property type="entry name" value="Dynein_AAA_lid"/>
    <property type="match status" value="1"/>
</dbReference>
<dbReference type="Pfam" id="PF18199">
    <property type="entry name" value="Dynein_C"/>
    <property type="match status" value="1"/>
</dbReference>
<dbReference type="Pfam" id="PF03028">
    <property type="entry name" value="Dynein_heavy"/>
    <property type="match status" value="1"/>
</dbReference>
<dbReference type="Pfam" id="PF12777">
    <property type="entry name" value="MT"/>
    <property type="match status" value="1"/>
</dbReference>
<dbReference type="SMART" id="SM00382">
    <property type="entry name" value="AAA"/>
    <property type="match status" value="2"/>
</dbReference>
<dbReference type="SUPFAM" id="SSF52540">
    <property type="entry name" value="P-loop containing nucleoside triphosphate hydrolases"/>
    <property type="match status" value="4"/>
</dbReference>
<proteinExistence type="evidence at protein level"/>
<comment type="function">
    <text evidence="1">Force generating protein of respiratory cilia. Produces force towards the minus ends of microtubules. Dynein has ATPase activity; the force-producing power stroke is thought to occur on release of ADP. Involved in sperm motility; implicated in sperm flagellar assembly (By similarity).</text>
</comment>
<comment type="subunit">
    <text>Consists of at least two heavy chains and a number of intermediate and light chains.</text>
</comment>
<comment type="subcellular location">
    <subcellularLocation>
        <location evidence="6">Cytoplasm</location>
        <location evidence="6">Cytoskeleton</location>
        <location evidence="6">Cilium axoneme</location>
    </subcellularLocation>
</comment>
<comment type="alternative products">
    <event type="alternative splicing"/>
    <isoform>
        <id>Q8BW94-1</id>
        <name>1</name>
        <sequence type="displayed"/>
    </isoform>
    <isoform>
        <id>Q8BW94-2</id>
        <name>2</name>
        <sequence type="described" ref="VSP_031929 VSP_031930"/>
    </isoform>
    <isoform>
        <id>Q8BW94-3</id>
        <name>3</name>
        <sequence type="described" ref="VSP_031926 VSP_031927 VSP_031928"/>
    </isoform>
</comment>
<comment type="domain">
    <text evidence="1">Dynein heavy chains probably consist of an N-terminal stem (which binds cargo and interacts with other dynein components), and the head or motor domain. The motor contains six tandemly-linked AAA domains in the head, which form a ring. A stalk-like structure (formed by two of the coiled coil domains) protrudes between AAA 4 and AAA 5 and terminates in a microtubule-binding site. A seventh domain may also contribute to this ring; it is not clear whether the N-terminus or the C-terminus forms this extra domain. There are four well-conserved and two non-conserved ATPase sites, one per AAA domain. Probably only one of these (within AAA 1) actually hydrolyzes ATP, the others may serve a regulatory function (By similarity).</text>
</comment>
<comment type="similarity">
    <text evidence="6">Belongs to the dynein heavy chain family.</text>
</comment>
<comment type="sequence caution" evidence="6">
    <conflict type="erroneous initiation">
        <sequence resource="EMBL-CDS" id="BAC35298"/>
    </conflict>
</comment>
<sequence length="4083" mass="467777">MSDTNCSAQKLDKSDSVHHMSHSQARPELPPLPVSANEEPSELYKTVMSHSFYPPLMQRTSWTLAVPFKEQDHHRGPSDSIGNNYSLTARDMKLKDLLKVYQPVTISIPRDKTSQGLPLGTSSKTSTEPSKKKMKFNLKAKDDVTGMPFVCKFSSSLSIKNTTDSSVTHPESRPMSPEQQMDVMLQQEMEIESKEQKPSELDLERYYYYLTNGIRKDMIAPENEEVMMRIYKLIPKTLLTTPALEPLQVSLRSEKESDYYYSLMKSIVDYILMDPMEKKRLFIKSIPRLFPHRVIRAPVPWHNIYQSTKKWNEEHLHTVNPMMYKLKELWFAEFQNLRFVRTADLLAGKLPLLPHEYKEVVQKHCREARHILLTKWIPTCAQLFVTQKEHWVHFAPKNDYDSSRNIEEYFASVASFMSLQLRDLVIKSLRDLVSFFMIHKDGNDFKEPYQEMDFFIPQLIMIKLEVRDPIIVFNPTFDDCWQLIKNSFLEIIKNSDGIPKVYLCWKPLASYICVSPHLRMTSVLQVESILFPDLKGYNMILGTVNPEESLVSDFLDQTLEVFKKNQVGPYKYLNVYKKYDDLLDNMAEKGISEFLKEKHEIEDFVTSINSIKKRKNEIASMHITVPLAMFCLDAVFLNYDLCERAQNLKDNLILYQVDVNRETNTSICNQYSTIADKVSEIPANTAELVALIEYLKKSSDVTVFKLRRQLRDASERLEFLMDYADLPSESIEDVFESSRNLLMSKRDQAEMDLIKRCSEFESRLEGYSKELEMFRKREVMTTEEMKNNVEKLHDLSKNLDLALTEFELINKEEELLEKEKSSFPLLQTLMINKIPYEQLWVTAYEFSTKSEEWMNGPLYLMNAEQIAEEIGNMWRTTYKLTKTLIDVPAPKRLAENVKLKIEKFKQHIPILNIACNPGMKDRHWQQISDIVGYEIKPTETTCLANMLEYGFGKFVDKLEPIGAAASKEYSLEKNLEKMKADWVNMCFSFVKYRDTDTSILCAVDDIQLILDDHVIKTQTMCGSVFIKPIEAECRKWEEKLVRVQENLDAWLKCQVTWLYLEPIFSSEDIIAQMPEEGKKFTTVDTYWKSLMAQAVNDTRVMVAADQPRMTEKLQEANVLLEDIQRGLNDYLEKKRLFFPRFFFLSNDELLEILSETKDPLRVQPHLKKCFEGIAKLEFTDNLEIKGMISSEKETVPFIQTIYPVKAKGMVEKWLQQVEQVMLASMRQVIENGIEAYVQVPRNAWVLEWPGQVVICVSSIFWTREVSEALVEDTLTDFLKKSNDQIAQIVELVRGKLSSGARLTLGALTVIDVHARDVVAKLRHDHINSLNDFQWISQLRYYWTEKNVHVQMITTEALYGYEYLGNSPRLVITPLTDRCYRTLMGALKLNLGGAPEGPAGTGKTETTKDLAKALAKQCVVFNCSDGLDYKAMGKFFKGLAQAGAWACFDEFNRIEVEVLSVVAQQILSIQQAIIRKLKRFIFEGTELSLNPTCAVFITMNPGYAGRAELPDNLKALFRTVAMMVPDYALIGEISLYSMGFLDSRSLAQKIVATYRLCSEQLSSQHHYDYGMRAVKSVLTAAGNLKLKYPEENESVLLLRALLDVNLAKFLAQDVPLFQGIISDLFPGVVLPKPDYEVFLEALNNNIRKMKLQPVPWFIGKIIQIYEMMLVRHGYMIVGDPMGGKTSAYKVLAAALGDLHAANQMEEFAVEFKIINPKAITMGQLYGCFDAVSHEWTDGVLANAFREQASSITDDRKWIIFDGPVDAVWIENMNTVLDDNKKLCLMSGEIIQMSSKMSLIFEPADLEQASPATVSRCGMIYMEAHQLGWKPLKDSYMDTLPRCLTKEHTELVEDMFTWLVQPCLDFSRLHCKFVVQTSPIHLAFSMMRLYSSLLDEIRDIQEEEMEIYEGLSSQQIFLWLQGLFLFSLVWTLAGTINAESRKKFDVFFRNLIMGMDDRNPRPKSVKLTKNNIFPERGSIYDFYFLKQGGGHWNAWTEYITKEEETIPANAKVSDLIIPTMETARQSFFLKTYLDHEIPILFVGPTGTGKSAITNDFLLHLPKNVYQPNFINFSARTSANQTQDIIMSKLDRRRKGLFGPPIGKKAVVFVDDLNMPAKEVYGAQPPIELLRQWIDHGYWFDKKDTNRLDIVDVLLVTAMGPPGGGRNDITGRFTRHLNIISINAFEDEILTKIFSSIADWHFGKGFDVMFLRYGKMLVQATQTIYRAAVENFLPTPSKSHYVFNLRDFSRVIQGVLLCPHTHLQDLEKFIRLWIHEVYRVFYDRLIDNDDRQTFFNLVKETTSNCFKQTMEKVLIHLSPTGKITDDNIRSLFFGDYLKPESDQKIYDEIIDLRGLTVVMEYYLDEFNSVSKAPMSLVMFKFAIEHISRICRVLKQKKGHLLLVGIGGSGRQSATKLSTFMNSYELYQIEITKNYTNSDWREDLKKIMLQSGVATKSTVFLFSDNQIKHESFVEDINMLLNTGDVPNIFPADEKADLVEKMQTAARTEGEKVEATPLSMYNFFIERGTNRAYFSLAMSPIGDAFRTRLRMFPSLINCCTIDWFQSWPTDALELVANKFLEDVELDDNIRAEVVSMCKYFQESVKKLSVDYYNTLLRHNYVTPTSYLELILTFKTLLNSKRQEVDTIRNRYLAGLQKLEFASSQVAVMQVELTALQPQLIQTSEDTAMMMVKIELETKEADAKKLLVQADEKEANAAAAISQAIKNECEGDLAEAMPALEAALAALDTLNPSDITLVKSMQNPPGPVKLVMESICVMKGLKPERKPDPSGSGKMIEDYWGVSRKILGDLKFLESLKTYDKDNIPSVIMKRIRERFIDHPDFQPAVIKNVSSACEGLCKWVRAMEVYDRVAKVVAPKRERLREAEGKLEIQMQKLNQKRAELKLVEDRLQDLNDEFELMNRKKNSLEKNIEICSQKLVRAEKLISGLGGEKDRWTEAARQLGIRYDNLTGDVLLASGTVAYLGAFTVDYRAQCQNEWLVSCKDKVIPGSVDFSLSNTLGDPIKIRAWQIAGLPVDSFSVDNGIIVSNSRRWPLMIDPQGQANKWVKNMEKTNKLSVIKFSDTNYVRTLENALQFGTPVLLENVGEELDAFIEPILLKATFKQQGVEYMRLGENIIEYSREFKFYITTRLRNPHYLPEVAVKVCLLNFMITPLGLQDQLLGIVAAKEKPELEEKKNKLILESAQNKKQLKEIEDKILEVLSLCEGNILEDETAIKILSSSKVLSEEISEKQEIASVTETQIDETRMGYKPVAVHSAAIFFCISDLAHIEPMYQYSLTWFINLYVQSLANSNKSDELDLRIEYIIEHFTLSIYNNVCRSLFEKDKLLFSLLLTVGLLKERKAIDEEVWYFLLTGGVALDNPFPNPAPEWLSEKSWGEIVRASSLQKLKGLMEDVMQNIKVWKDIYDSAWPHEESLPSPWFFLQTLEKIAILRCLRPDKIVPAIQNFICETMGKIFIEAPTFDLQGSYGDSSCCVPLIFILSPGADPMAGLLKFADDVSMGGTKTQTISLGQGQGPIAANMINKAIHEGTWVVLQNCHLATSWMPALEKICEEVIVPENTNSEFRLWLTSYPSEKFPVSILQNGIKMTNEPPKGLRANLLRSYLNDPISDPLFFQSCTKPVIWQKLLFGLCFFHAIVQERRNYGALGWNIPYEFNESDLRISMRQIQMFLNDYEEVPFEALTYLTGECNYGGRVTDDKDRRLLLSLLSMFYCKEIETDNYHIAPGDAYVIPPYGSYQSYIEYLRTLPITAHPEVFGLHENADITKDNQETNQLFQGVLLTLPRQSGGSGKSPQEVVEELAQDILSKLPNDFNLEEVMKKYPVVYKESMNTVLRQELIRFNRLTKVVRRSLIDLGRAIKGQVLMSSELEEVFNSMLVGKVPAMWAAKSYPSLKPLGGYVADLLARLTFFQEWIDKGPPVVFWISGFYFTQSFLTGVSQNYARKYTIPIDHIGFEFEVTPKETTMENIPEDGAYIKGLFLEGARWDRSTSQIGESLPKILYDPLPIIWLKPGESASFLHQDIYVCPVYKTSARRGILSTTGHSTNYVLSIELPTDMPQKHWINRGVASLCQLDN</sequence>
<gene>
    <name type="primary">Dnah3</name>
    <name type="synonym">Dnahc3</name>
</gene>
<evidence type="ECO:0000250" key="1"/>
<evidence type="ECO:0000255" key="2"/>
<evidence type="ECO:0000256" key="3">
    <source>
        <dbReference type="SAM" id="MobiDB-lite"/>
    </source>
</evidence>
<evidence type="ECO:0000303" key="4">
    <source>
    </source>
</evidence>
<evidence type="ECO:0000303" key="5">
    <source>
    </source>
</evidence>
<evidence type="ECO:0000305" key="6"/>